<protein>
    <recommendedName>
        <fullName>DNA-3-methyladenine glycosylase</fullName>
        <ecNumber>3.2.2.21</ecNumber>
    </recommendedName>
    <alternativeName>
        <fullName>3-methyladenine-DNA glycosidase</fullName>
    </alternativeName>
</protein>
<comment type="function">
    <text evidence="2">Is involved in the adaptive response to alkylation damage in DNA caused by alkylating agents. Catalyzes the hydrolysis of the deoxyribose N-glycosidic bond to excise 3-methyladenine and 7-methylguanine from the damaged DNA polymer formed by alkylation lesions.</text>
</comment>
<comment type="catalytic activity">
    <reaction evidence="2">
        <text>Hydrolysis of alkylated DNA, releasing 3-methyladenine, 3-methylguanine, 7-methylguanine and 7-methyladenine.</text>
        <dbReference type="EC" id="3.2.2.21"/>
    </reaction>
</comment>
<comment type="induction">
    <text evidence="2">Up-regulated by methylated AdaA in response to the exposure to alkylating agents.</text>
</comment>
<comment type="disruption phenotype">
    <text evidence="2">Disruption of this gene sensitizes cells to the alkylating agent N-propyl-N'-nitro-N-nitrosoguanidine.</text>
</comment>
<comment type="miscellaneous">
    <text>Overproduction of this gene renders cells highly resistant to the alkylating agent N-propyl-N'-nitro-N-nitrosoguanidine.</text>
</comment>
<comment type="similarity">
    <text evidence="3">Belongs to the alkylbase DNA glycosidase AlkA family.</text>
</comment>
<sequence length="303" mass="35634">MTWHEVNDVIVITLPEIFDMNANLGYLTREKNECMYEIENNIITKVIAIGEIRSLVQVSVINNKQMIVQFLNDSRPVEQWKREEIVKYIHEWFDLDNDLTPFYEMAKADPLLKMPARKFYGLRVIGIPDLFEALCWGVLGQQINLAFAYSLKKQFVEAFGDSIEWNGKKYWVFPPYERIARLTPTDLADIKMTVKKSEYIIGIARLMASGELSREKLMKMNFKDAEKNLIKIRGIGPWTANYVLMRCLRFPTAFPIDDVGLIHSIKILRNMNRKPTKDEILEISVPWKEWQSYATFYLWRVLY</sequence>
<proteinExistence type="evidence at protein level"/>
<feature type="chain" id="PRO_0000194880" description="DNA-3-methyladenine glycosylase">
    <location>
        <begin position="1"/>
        <end position="303"/>
    </location>
</feature>
<feature type="active site" description="Proton acceptor" evidence="1">
    <location>
        <position position="258"/>
    </location>
</feature>
<feature type="site" description="Determinant for substrate specificity and/or activity" evidence="1">
    <location>
        <position position="238"/>
    </location>
</feature>
<organism>
    <name type="scientific">Bacillus subtilis (strain 168)</name>
    <dbReference type="NCBI Taxonomy" id="224308"/>
    <lineage>
        <taxon>Bacteria</taxon>
        <taxon>Bacillati</taxon>
        <taxon>Bacillota</taxon>
        <taxon>Bacilli</taxon>
        <taxon>Bacillales</taxon>
        <taxon>Bacillaceae</taxon>
        <taxon>Bacillus</taxon>
    </lineage>
</organism>
<evidence type="ECO:0000250" key="1"/>
<evidence type="ECO:0000269" key="2">
    <source>
    </source>
</evidence>
<evidence type="ECO:0000305" key="3"/>
<name>3MGA_BACSU</name>
<dbReference type="EC" id="3.2.2.21"/>
<dbReference type="EMBL" id="D14465">
    <property type="protein sequence ID" value="BAA03361.1"/>
    <property type="molecule type" value="Genomic_DNA"/>
</dbReference>
<dbReference type="EMBL" id="AB006424">
    <property type="protein sequence ID" value="BAA33073.1"/>
    <property type="molecule type" value="Genomic_DNA"/>
</dbReference>
<dbReference type="EMBL" id="AL009126">
    <property type="protein sequence ID" value="CAB11956.1"/>
    <property type="molecule type" value="Genomic_DNA"/>
</dbReference>
<dbReference type="PIR" id="E69584">
    <property type="entry name" value="E69584"/>
</dbReference>
<dbReference type="RefSeq" id="NP_388061.1">
    <property type="nucleotide sequence ID" value="NC_000964.3"/>
</dbReference>
<dbReference type="RefSeq" id="WP_003234926.1">
    <property type="nucleotide sequence ID" value="NZ_OZ025638.1"/>
</dbReference>
<dbReference type="SMR" id="P37878"/>
<dbReference type="FunCoup" id="P37878">
    <property type="interactions" value="220"/>
</dbReference>
<dbReference type="STRING" id="224308.BSU01800"/>
<dbReference type="PaxDb" id="224308-BSU01800"/>
<dbReference type="DNASU" id="938586"/>
<dbReference type="EnsemblBacteria" id="CAB11956">
    <property type="protein sequence ID" value="CAB11956"/>
    <property type="gene ID" value="BSU_01800"/>
</dbReference>
<dbReference type="GeneID" id="938586"/>
<dbReference type="KEGG" id="bsu:BSU01800"/>
<dbReference type="PATRIC" id="fig|224308.179.peg.186"/>
<dbReference type="eggNOG" id="COG0122">
    <property type="taxonomic scope" value="Bacteria"/>
</dbReference>
<dbReference type="InParanoid" id="P37878"/>
<dbReference type="OrthoDB" id="9785929at2"/>
<dbReference type="PhylomeDB" id="P37878"/>
<dbReference type="BioCyc" id="BSUB:BSU01800-MONOMER"/>
<dbReference type="Proteomes" id="UP000001570">
    <property type="component" value="Chromosome"/>
</dbReference>
<dbReference type="GO" id="GO:0005737">
    <property type="term" value="C:cytoplasm"/>
    <property type="evidence" value="ECO:0000318"/>
    <property type="project" value="GO_Central"/>
</dbReference>
<dbReference type="GO" id="GO:0032993">
    <property type="term" value="C:protein-DNA complex"/>
    <property type="evidence" value="ECO:0000318"/>
    <property type="project" value="GO_Central"/>
</dbReference>
<dbReference type="GO" id="GO:0032131">
    <property type="term" value="F:alkylated DNA binding"/>
    <property type="evidence" value="ECO:0000318"/>
    <property type="project" value="GO_Central"/>
</dbReference>
<dbReference type="GO" id="GO:0008725">
    <property type="term" value="F:DNA-3-methyladenine glycosylase activity"/>
    <property type="evidence" value="ECO:0000318"/>
    <property type="project" value="GO_Central"/>
</dbReference>
<dbReference type="GO" id="GO:0043916">
    <property type="term" value="F:DNA-7-methylguanine glycosylase activity"/>
    <property type="evidence" value="ECO:0000318"/>
    <property type="project" value="GO_Central"/>
</dbReference>
<dbReference type="GO" id="GO:0008534">
    <property type="term" value="F:oxidized purine nucleobase lesion DNA N-glycosylase activity"/>
    <property type="evidence" value="ECO:0007669"/>
    <property type="project" value="InterPro"/>
</dbReference>
<dbReference type="GO" id="GO:0006285">
    <property type="term" value="P:base-excision repair, AP site formation"/>
    <property type="evidence" value="ECO:0000318"/>
    <property type="project" value="GO_Central"/>
</dbReference>
<dbReference type="GO" id="GO:0006307">
    <property type="term" value="P:DNA alkylation repair"/>
    <property type="evidence" value="ECO:0000318"/>
    <property type="project" value="GO_Central"/>
</dbReference>
<dbReference type="GO" id="GO:0006289">
    <property type="term" value="P:nucleotide-excision repair"/>
    <property type="evidence" value="ECO:0007669"/>
    <property type="project" value="InterPro"/>
</dbReference>
<dbReference type="CDD" id="cd00056">
    <property type="entry name" value="ENDO3c"/>
    <property type="match status" value="1"/>
</dbReference>
<dbReference type="FunFam" id="3.30.310.20:FF:000003">
    <property type="entry name" value="DNA-3-methyladenine glycosylase"/>
    <property type="match status" value="1"/>
</dbReference>
<dbReference type="FunFam" id="1.10.340.30:FF:000004">
    <property type="entry name" value="DNA-3-methyladenine glycosylase II"/>
    <property type="match status" value="1"/>
</dbReference>
<dbReference type="Gene3D" id="3.30.310.20">
    <property type="entry name" value="DNA-3-methyladenine glycosylase AlkA, N-terminal domain"/>
    <property type="match status" value="1"/>
</dbReference>
<dbReference type="Gene3D" id="1.10.1670.10">
    <property type="entry name" value="Helix-hairpin-Helix base-excision DNA repair enzymes (C-terminal)"/>
    <property type="match status" value="1"/>
</dbReference>
<dbReference type="Gene3D" id="1.10.340.30">
    <property type="entry name" value="Hypothetical protein, domain 2"/>
    <property type="match status" value="1"/>
</dbReference>
<dbReference type="InterPro" id="IPR037046">
    <property type="entry name" value="AlkA_N_sf"/>
</dbReference>
<dbReference type="InterPro" id="IPR051912">
    <property type="entry name" value="Alkylbase_DNA_Glycosylase/TA"/>
</dbReference>
<dbReference type="InterPro" id="IPR000035">
    <property type="entry name" value="Alkylbase_DNA_glycsylse_CS"/>
</dbReference>
<dbReference type="InterPro" id="IPR011257">
    <property type="entry name" value="DNA_glycosylase"/>
</dbReference>
<dbReference type="InterPro" id="IPR003265">
    <property type="entry name" value="HhH-GPD_domain"/>
</dbReference>
<dbReference type="InterPro" id="IPR023170">
    <property type="entry name" value="HhH_base_excis_C"/>
</dbReference>
<dbReference type="InterPro" id="IPR012904">
    <property type="entry name" value="OGG_N"/>
</dbReference>
<dbReference type="PANTHER" id="PTHR43003">
    <property type="entry name" value="DNA-3-METHYLADENINE GLYCOSYLASE"/>
    <property type="match status" value="1"/>
</dbReference>
<dbReference type="PANTHER" id="PTHR43003:SF12">
    <property type="entry name" value="DNA-3-METHYLADENINE GLYCOSYLASE"/>
    <property type="match status" value="1"/>
</dbReference>
<dbReference type="Pfam" id="PF00730">
    <property type="entry name" value="HhH-GPD"/>
    <property type="match status" value="1"/>
</dbReference>
<dbReference type="Pfam" id="PF07934">
    <property type="entry name" value="OGG_N"/>
    <property type="match status" value="1"/>
</dbReference>
<dbReference type="SMART" id="SM00478">
    <property type="entry name" value="ENDO3c"/>
    <property type="match status" value="1"/>
</dbReference>
<dbReference type="SUPFAM" id="SSF48150">
    <property type="entry name" value="DNA-glycosylase"/>
    <property type="match status" value="1"/>
</dbReference>
<dbReference type="SUPFAM" id="SSF55945">
    <property type="entry name" value="TATA-box binding protein-like"/>
    <property type="match status" value="1"/>
</dbReference>
<dbReference type="PROSITE" id="PS00516">
    <property type="entry name" value="ALKYLBASE_DNA_GLYCOS"/>
    <property type="match status" value="1"/>
</dbReference>
<keyword id="KW-0227">DNA damage</keyword>
<keyword id="KW-0234">DNA repair</keyword>
<keyword id="KW-0378">Hydrolase</keyword>
<keyword id="KW-1185">Reference proteome</keyword>
<reference key="1">
    <citation type="journal article" date="1993" name="J. Bacteriol.">
        <title>Bacillus subtilis alkA gene encoding inducible 3-methyladenine DNA glycosylase is adjacent to the ada operon.</title>
        <authorList>
            <person name="Morohoshi F."/>
            <person name="Hayashi K."/>
            <person name="Munakata N."/>
        </authorList>
    </citation>
    <scope>NUCLEOTIDE SEQUENCE [GENOMIC DNA]</scope>
    <scope>FUNCTION</scope>
    <scope>CATALYTIC ACTIVITY</scope>
    <scope>ROLE IN RESISTANCE TO ALKYLATION DAMAGE</scope>
    <scope>GENE NAME</scope>
    <scope>INDUCTION</scope>
    <scope>DISRUPTION PHENOTYPE</scope>
    <source>
        <strain>168</strain>
    </source>
</reference>
<reference key="2">
    <citation type="submission" date="1997-07" db="EMBL/GenBank/DDBJ databases">
        <title>Sequence analysis of the 70kb region between 17 and 23 degree of the Bacillus subtilis chromosome.</title>
        <authorList>
            <person name="Haga K."/>
            <person name="Liu H."/>
            <person name="Yasumoto K."/>
            <person name="Takahashi H."/>
            <person name="Yoshikawa H."/>
        </authorList>
    </citation>
    <scope>NUCLEOTIDE SEQUENCE [GENOMIC DNA]</scope>
    <source>
        <strain>168</strain>
    </source>
</reference>
<reference key="3">
    <citation type="journal article" date="1997" name="Nature">
        <title>The complete genome sequence of the Gram-positive bacterium Bacillus subtilis.</title>
        <authorList>
            <person name="Kunst F."/>
            <person name="Ogasawara N."/>
            <person name="Moszer I."/>
            <person name="Albertini A.M."/>
            <person name="Alloni G."/>
            <person name="Azevedo V."/>
            <person name="Bertero M.G."/>
            <person name="Bessieres P."/>
            <person name="Bolotin A."/>
            <person name="Borchert S."/>
            <person name="Borriss R."/>
            <person name="Boursier L."/>
            <person name="Brans A."/>
            <person name="Braun M."/>
            <person name="Brignell S.C."/>
            <person name="Bron S."/>
            <person name="Brouillet S."/>
            <person name="Bruschi C.V."/>
            <person name="Caldwell B."/>
            <person name="Capuano V."/>
            <person name="Carter N.M."/>
            <person name="Choi S.-K."/>
            <person name="Codani J.-J."/>
            <person name="Connerton I.F."/>
            <person name="Cummings N.J."/>
            <person name="Daniel R.A."/>
            <person name="Denizot F."/>
            <person name="Devine K.M."/>
            <person name="Duesterhoeft A."/>
            <person name="Ehrlich S.D."/>
            <person name="Emmerson P.T."/>
            <person name="Entian K.-D."/>
            <person name="Errington J."/>
            <person name="Fabret C."/>
            <person name="Ferrari E."/>
            <person name="Foulger D."/>
            <person name="Fritz C."/>
            <person name="Fujita M."/>
            <person name="Fujita Y."/>
            <person name="Fuma S."/>
            <person name="Galizzi A."/>
            <person name="Galleron N."/>
            <person name="Ghim S.-Y."/>
            <person name="Glaser P."/>
            <person name="Goffeau A."/>
            <person name="Golightly E.J."/>
            <person name="Grandi G."/>
            <person name="Guiseppi G."/>
            <person name="Guy B.J."/>
            <person name="Haga K."/>
            <person name="Haiech J."/>
            <person name="Harwood C.R."/>
            <person name="Henaut A."/>
            <person name="Hilbert H."/>
            <person name="Holsappel S."/>
            <person name="Hosono S."/>
            <person name="Hullo M.-F."/>
            <person name="Itaya M."/>
            <person name="Jones L.-M."/>
            <person name="Joris B."/>
            <person name="Karamata D."/>
            <person name="Kasahara Y."/>
            <person name="Klaerr-Blanchard M."/>
            <person name="Klein C."/>
            <person name="Kobayashi Y."/>
            <person name="Koetter P."/>
            <person name="Koningstein G."/>
            <person name="Krogh S."/>
            <person name="Kumano M."/>
            <person name="Kurita K."/>
            <person name="Lapidus A."/>
            <person name="Lardinois S."/>
            <person name="Lauber J."/>
            <person name="Lazarevic V."/>
            <person name="Lee S.-M."/>
            <person name="Levine A."/>
            <person name="Liu H."/>
            <person name="Masuda S."/>
            <person name="Mauel C."/>
            <person name="Medigue C."/>
            <person name="Medina N."/>
            <person name="Mellado R.P."/>
            <person name="Mizuno M."/>
            <person name="Moestl D."/>
            <person name="Nakai S."/>
            <person name="Noback M."/>
            <person name="Noone D."/>
            <person name="O'Reilly M."/>
            <person name="Ogawa K."/>
            <person name="Ogiwara A."/>
            <person name="Oudega B."/>
            <person name="Park S.-H."/>
            <person name="Parro V."/>
            <person name="Pohl T.M."/>
            <person name="Portetelle D."/>
            <person name="Porwollik S."/>
            <person name="Prescott A.M."/>
            <person name="Presecan E."/>
            <person name="Pujic P."/>
            <person name="Purnelle B."/>
            <person name="Rapoport G."/>
            <person name="Rey M."/>
            <person name="Reynolds S."/>
            <person name="Rieger M."/>
            <person name="Rivolta C."/>
            <person name="Rocha E."/>
            <person name="Roche B."/>
            <person name="Rose M."/>
            <person name="Sadaie Y."/>
            <person name="Sato T."/>
            <person name="Scanlan E."/>
            <person name="Schleich S."/>
            <person name="Schroeter R."/>
            <person name="Scoffone F."/>
            <person name="Sekiguchi J."/>
            <person name="Sekowska A."/>
            <person name="Seror S.J."/>
            <person name="Serror P."/>
            <person name="Shin B.-S."/>
            <person name="Soldo B."/>
            <person name="Sorokin A."/>
            <person name="Tacconi E."/>
            <person name="Takagi T."/>
            <person name="Takahashi H."/>
            <person name="Takemaru K."/>
            <person name="Takeuchi M."/>
            <person name="Tamakoshi A."/>
            <person name="Tanaka T."/>
            <person name="Terpstra P."/>
            <person name="Tognoni A."/>
            <person name="Tosato V."/>
            <person name="Uchiyama S."/>
            <person name="Vandenbol M."/>
            <person name="Vannier F."/>
            <person name="Vassarotti A."/>
            <person name="Viari A."/>
            <person name="Wambutt R."/>
            <person name="Wedler E."/>
            <person name="Wedler H."/>
            <person name="Weitzenegger T."/>
            <person name="Winters P."/>
            <person name="Wipat A."/>
            <person name="Yamamoto H."/>
            <person name="Yamane K."/>
            <person name="Yasumoto K."/>
            <person name="Yata K."/>
            <person name="Yoshida K."/>
            <person name="Yoshikawa H.-F."/>
            <person name="Zumstein E."/>
            <person name="Yoshikawa H."/>
            <person name="Danchin A."/>
        </authorList>
    </citation>
    <scope>NUCLEOTIDE SEQUENCE [LARGE SCALE GENOMIC DNA]</scope>
    <source>
        <strain>168</strain>
    </source>
</reference>
<gene>
    <name type="primary">alkA</name>
    <name type="ordered locus">BSU01800</name>
</gene>
<accession>P37878</accession>